<organism>
    <name type="scientific">Homo sapiens</name>
    <name type="common">Human</name>
    <dbReference type="NCBI Taxonomy" id="9606"/>
    <lineage>
        <taxon>Eukaryota</taxon>
        <taxon>Metazoa</taxon>
        <taxon>Chordata</taxon>
        <taxon>Craniata</taxon>
        <taxon>Vertebrata</taxon>
        <taxon>Euteleostomi</taxon>
        <taxon>Mammalia</taxon>
        <taxon>Eutheria</taxon>
        <taxon>Euarchontoglires</taxon>
        <taxon>Primates</taxon>
        <taxon>Haplorrhini</taxon>
        <taxon>Catarrhini</taxon>
        <taxon>Hominidae</taxon>
        <taxon>Homo</taxon>
    </lineage>
</organism>
<dbReference type="EC" id="2.3.2.27" evidence="8 10 12 15"/>
<dbReference type="EMBL" id="U18543">
    <property type="protein sequence ID" value="AAA86474.1"/>
    <property type="molecule type" value="mRNA"/>
</dbReference>
<dbReference type="EMBL" id="AL133284">
    <property type="status" value="NOT_ANNOTATED_CDS"/>
    <property type="molecule type" value="Genomic_DNA"/>
</dbReference>
<dbReference type="EMBL" id="BC003154">
    <property type="protein sequence ID" value="AAH03154.1"/>
    <property type="molecule type" value="mRNA"/>
</dbReference>
<dbReference type="CCDS" id="CCDS6817.1"/>
<dbReference type="RefSeq" id="NP_001093149.1">
    <property type="nucleotide sequence ID" value="NM_001099679.2"/>
</dbReference>
<dbReference type="RefSeq" id="NP_001365977.1">
    <property type="nucleotide sequence ID" value="NM_001379048.1"/>
</dbReference>
<dbReference type="RefSeq" id="NP_001365978.1">
    <property type="nucleotide sequence ID" value="NM_001379049.1"/>
</dbReference>
<dbReference type="RefSeq" id="NP_001365979.1">
    <property type="nucleotide sequence ID" value="NM_001379050.1"/>
</dbReference>
<dbReference type="RefSeq" id="NP_036342.2">
    <property type="nucleotide sequence ID" value="NM_012210.4"/>
</dbReference>
<dbReference type="RefSeq" id="XP_005251870.1">
    <property type="nucleotide sequence ID" value="XM_005251813.3"/>
</dbReference>
<dbReference type="RefSeq" id="XP_011516700.1">
    <property type="nucleotide sequence ID" value="XM_011518398.2"/>
</dbReference>
<dbReference type="RefSeq" id="XP_016869975.1">
    <property type="nucleotide sequence ID" value="XM_017014486.1"/>
</dbReference>
<dbReference type="PDB" id="2CT2">
    <property type="method" value="NMR"/>
    <property type="chains" value="A=10-84"/>
</dbReference>
<dbReference type="PDB" id="5FEY">
    <property type="method" value="X-ray"/>
    <property type="resolution" value="2.23 A"/>
    <property type="chains" value="A/B=7-93"/>
</dbReference>
<dbReference type="PDBsum" id="2CT2"/>
<dbReference type="PDBsum" id="5FEY"/>
<dbReference type="SMR" id="Q13049"/>
<dbReference type="BioGRID" id="116608">
    <property type="interactions" value="217"/>
</dbReference>
<dbReference type="CORUM" id="Q13049"/>
<dbReference type="FunCoup" id="Q13049">
    <property type="interactions" value="1869"/>
</dbReference>
<dbReference type="IntAct" id="Q13049">
    <property type="interactions" value="108"/>
</dbReference>
<dbReference type="MINT" id="Q13049"/>
<dbReference type="STRING" id="9606.ENSP00000408292"/>
<dbReference type="iPTMnet" id="Q13049"/>
<dbReference type="PhosphoSitePlus" id="Q13049"/>
<dbReference type="SwissPalm" id="Q13049"/>
<dbReference type="BioMuta" id="TRIM32"/>
<dbReference type="DMDM" id="20178303"/>
<dbReference type="jPOST" id="Q13049"/>
<dbReference type="MassIVE" id="Q13049"/>
<dbReference type="PaxDb" id="9606-ENSP00000408292"/>
<dbReference type="PeptideAtlas" id="Q13049"/>
<dbReference type="ProteomicsDB" id="59123"/>
<dbReference type="Pumba" id="Q13049"/>
<dbReference type="Antibodypedia" id="15684">
    <property type="antibodies" value="204 antibodies from 32 providers"/>
</dbReference>
<dbReference type="DNASU" id="22954"/>
<dbReference type="Ensembl" id="ENST00000373983.2">
    <property type="protein sequence ID" value="ENSP00000363095.1"/>
    <property type="gene ID" value="ENSG00000119401.11"/>
</dbReference>
<dbReference type="Ensembl" id="ENST00000450136.2">
    <property type="protein sequence ID" value="ENSP00000408292.1"/>
    <property type="gene ID" value="ENSG00000119401.11"/>
</dbReference>
<dbReference type="GeneID" id="22954"/>
<dbReference type="KEGG" id="hsa:22954"/>
<dbReference type="MANE-Select" id="ENST00000450136.2">
    <property type="protein sequence ID" value="ENSP00000408292.1"/>
    <property type="RefSeq nucleotide sequence ID" value="NM_012210.4"/>
    <property type="RefSeq protein sequence ID" value="NP_036342.2"/>
</dbReference>
<dbReference type="UCSC" id="uc004bjw.3">
    <property type="organism name" value="human"/>
</dbReference>
<dbReference type="AGR" id="HGNC:16380"/>
<dbReference type="CTD" id="22954"/>
<dbReference type="DisGeNET" id="22954"/>
<dbReference type="GeneCards" id="TRIM32"/>
<dbReference type="GeneReviews" id="TRIM32"/>
<dbReference type="HGNC" id="HGNC:16380">
    <property type="gene designation" value="TRIM32"/>
</dbReference>
<dbReference type="HPA" id="ENSG00000119401">
    <property type="expression patterns" value="Low tissue specificity"/>
</dbReference>
<dbReference type="MalaCards" id="TRIM32"/>
<dbReference type="MIM" id="254110">
    <property type="type" value="phenotype"/>
</dbReference>
<dbReference type="MIM" id="602290">
    <property type="type" value="gene"/>
</dbReference>
<dbReference type="MIM" id="615988">
    <property type="type" value="phenotype"/>
</dbReference>
<dbReference type="neXtProt" id="NX_Q13049"/>
<dbReference type="OpenTargets" id="ENSG00000119401"/>
<dbReference type="Orphanet" id="110">
    <property type="disease" value="Bardet-Biedl syndrome"/>
</dbReference>
<dbReference type="Orphanet" id="1878">
    <property type="disease" value="TRIM32-related limb-girdle muscular dystrophy R8"/>
</dbReference>
<dbReference type="PharmGKB" id="PA38130"/>
<dbReference type="VEuPathDB" id="HostDB:ENSG00000119401"/>
<dbReference type="eggNOG" id="KOG2177">
    <property type="taxonomic scope" value="Eukaryota"/>
</dbReference>
<dbReference type="GeneTree" id="ENSGT00940000160949"/>
<dbReference type="HOGENOM" id="CLU_423860_0_0_1"/>
<dbReference type="InParanoid" id="Q13049"/>
<dbReference type="OMA" id="LPTMFQL"/>
<dbReference type="OrthoDB" id="6105938at2759"/>
<dbReference type="PAN-GO" id="Q13049">
    <property type="GO annotations" value="4 GO annotations based on evolutionary models"/>
</dbReference>
<dbReference type="PhylomeDB" id="Q13049"/>
<dbReference type="TreeFam" id="TF331018"/>
<dbReference type="PathwayCommons" id="Q13049"/>
<dbReference type="Reactome" id="R-HSA-3134975">
    <property type="pathway name" value="Regulation of innate immune responses to cytosolic DNA"/>
</dbReference>
<dbReference type="Reactome" id="R-HSA-983168">
    <property type="pathway name" value="Antigen processing: Ubiquitination &amp; Proteasome degradation"/>
</dbReference>
<dbReference type="SignaLink" id="Q13049"/>
<dbReference type="SIGNOR" id="Q13049"/>
<dbReference type="UniPathway" id="UPA00143"/>
<dbReference type="BioGRID-ORCS" id="22954">
    <property type="hits" value="14 hits in 1194 CRISPR screens"/>
</dbReference>
<dbReference type="CD-CODE" id="1C4BF022">
    <property type="entry name" value="Cytoplasmic bodies"/>
</dbReference>
<dbReference type="ChiTaRS" id="TRIM32">
    <property type="organism name" value="human"/>
</dbReference>
<dbReference type="EvolutionaryTrace" id="Q13049"/>
<dbReference type="GeneWiki" id="TRIM32"/>
<dbReference type="GenomeRNAi" id="22954"/>
<dbReference type="Pharos" id="Q13049">
    <property type="development level" value="Tbio"/>
</dbReference>
<dbReference type="PRO" id="PR:Q13049"/>
<dbReference type="Proteomes" id="UP000005640">
    <property type="component" value="Chromosome 9"/>
</dbReference>
<dbReference type="RNAct" id="Q13049">
    <property type="molecule type" value="protein"/>
</dbReference>
<dbReference type="Bgee" id="ENSG00000119401">
    <property type="expression patterns" value="Expressed in stromal cell of endometrium and 177 other cell types or tissues"/>
</dbReference>
<dbReference type="ExpressionAtlas" id="Q13049">
    <property type="expression patterns" value="baseline and differential"/>
</dbReference>
<dbReference type="GO" id="GO:0005776">
    <property type="term" value="C:autophagosome"/>
    <property type="evidence" value="ECO:0000314"/>
    <property type="project" value="UniProt"/>
</dbReference>
<dbReference type="GO" id="GO:0005813">
    <property type="term" value="C:centrosome"/>
    <property type="evidence" value="ECO:0000314"/>
    <property type="project" value="UniProt"/>
</dbReference>
<dbReference type="GO" id="GO:0005737">
    <property type="term" value="C:cytoplasm"/>
    <property type="evidence" value="ECO:0000314"/>
    <property type="project" value="UniProtKB"/>
</dbReference>
<dbReference type="GO" id="GO:0005829">
    <property type="term" value="C:cytosol"/>
    <property type="evidence" value="ECO:0000304"/>
    <property type="project" value="Reactome"/>
</dbReference>
<dbReference type="GO" id="GO:0005783">
    <property type="term" value="C:endoplasmic reticulum"/>
    <property type="evidence" value="ECO:0007669"/>
    <property type="project" value="UniProtKB-SubCell"/>
</dbReference>
<dbReference type="GO" id="GO:0005739">
    <property type="term" value="C:mitochondrion"/>
    <property type="evidence" value="ECO:0007669"/>
    <property type="project" value="UniProtKB-SubCell"/>
</dbReference>
<dbReference type="GO" id="GO:0005634">
    <property type="term" value="C:nucleus"/>
    <property type="evidence" value="ECO:0000250"/>
    <property type="project" value="BHF-UCL"/>
</dbReference>
<dbReference type="GO" id="GO:0005863">
    <property type="term" value="C:striated muscle myosin thick filament"/>
    <property type="evidence" value="ECO:0007669"/>
    <property type="project" value="Ensembl"/>
</dbReference>
<dbReference type="GO" id="GO:0042802">
    <property type="term" value="F:identical protein binding"/>
    <property type="evidence" value="ECO:0000353"/>
    <property type="project" value="IntAct"/>
</dbReference>
<dbReference type="GO" id="GO:0017022">
    <property type="term" value="F:myosin binding"/>
    <property type="evidence" value="ECO:0000250"/>
    <property type="project" value="BHF-UCL"/>
</dbReference>
<dbReference type="GO" id="GO:0030674">
    <property type="term" value="F:protein-macromolecule adaptor activity"/>
    <property type="evidence" value="ECO:0000314"/>
    <property type="project" value="UniProt"/>
</dbReference>
<dbReference type="GO" id="GO:0003723">
    <property type="term" value="F:RNA binding"/>
    <property type="evidence" value="ECO:0000250"/>
    <property type="project" value="BHF-UCL"/>
</dbReference>
<dbReference type="GO" id="GO:0030957">
    <property type="term" value="F:Tat protein binding"/>
    <property type="evidence" value="ECO:0000304"/>
    <property type="project" value="BHF-UCL"/>
</dbReference>
<dbReference type="GO" id="GO:0003713">
    <property type="term" value="F:transcription coactivator activity"/>
    <property type="evidence" value="ECO:0000314"/>
    <property type="project" value="ARUK-UCL"/>
</dbReference>
<dbReference type="GO" id="GO:0031369">
    <property type="term" value="F:translation initiation factor binding"/>
    <property type="evidence" value="ECO:0000250"/>
    <property type="project" value="BHF-UCL"/>
</dbReference>
<dbReference type="GO" id="GO:0043130">
    <property type="term" value="F:ubiquitin binding"/>
    <property type="evidence" value="ECO:0000314"/>
    <property type="project" value="UniProtKB"/>
</dbReference>
<dbReference type="GO" id="GO:0061630">
    <property type="term" value="F:ubiquitin protein ligase activity"/>
    <property type="evidence" value="ECO:0000314"/>
    <property type="project" value="UniProtKB"/>
</dbReference>
<dbReference type="GO" id="GO:0004842">
    <property type="term" value="F:ubiquitin-protein transferase activity"/>
    <property type="evidence" value="ECO:0000314"/>
    <property type="project" value="UniProtKB"/>
</dbReference>
<dbReference type="GO" id="GO:0008270">
    <property type="term" value="F:zinc ion binding"/>
    <property type="evidence" value="ECO:0007669"/>
    <property type="project" value="UniProtKB-KW"/>
</dbReference>
<dbReference type="GO" id="GO:0007014">
    <property type="term" value="P:actin ubiquitination"/>
    <property type="evidence" value="ECO:0007669"/>
    <property type="project" value="Ensembl"/>
</dbReference>
<dbReference type="GO" id="GO:0000045">
    <property type="term" value="P:autophagosome assembly"/>
    <property type="evidence" value="ECO:0000314"/>
    <property type="project" value="UniProt"/>
</dbReference>
<dbReference type="GO" id="GO:0061564">
    <property type="term" value="P:axon development"/>
    <property type="evidence" value="ECO:0007669"/>
    <property type="project" value="Ensembl"/>
</dbReference>
<dbReference type="GO" id="GO:0034198">
    <property type="term" value="P:cellular response to amino acid starvation"/>
    <property type="evidence" value="ECO:0000318"/>
    <property type="project" value="GO_Central"/>
</dbReference>
<dbReference type="GO" id="GO:0033554">
    <property type="term" value="P:cellular response to stress"/>
    <property type="evidence" value="ECO:0000314"/>
    <property type="project" value="UniProt"/>
</dbReference>
<dbReference type="GO" id="GO:0045444">
    <property type="term" value="P:fat cell differentiation"/>
    <property type="evidence" value="ECO:0000250"/>
    <property type="project" value="BHF-UCL"/>
</dbReference>
<dbReference type="GO" id="GO:0010994">
    <property type="term" value="P:free ubiquitin chain polymerization"/>
    <property type="evidence" value="ECO:0000314"/>
    <property type="project" value="UniProtKB"/>
</dbReference>
<dbReference type="GO" id="GO:0045087">
    <property type="term" value="P:innate immune response"/>
    <property type="evidence" value="ECO:0000314"/>
    <property type="project" value="UniProtKB"/>
</dbReference>
<dbReference type="GO" id="GO:0046716">
    <property type="term" value="P:muscle cell cellular homeostasis"/>
    <property type="evidence" value="ECO:0007669"/>
    <property type="project" value="Ensembl"/>
</dbReference>
<dbReference type="GO" id="GO:1902018">
    <property type="term" value="P:negative regulation of cilium assembly"/>
    <property type="evidence" value="ECO:0000314"/>
    <property type="project" value="UniProt"/>
</dbReference>
<dbReference type="GO" id="GO:0048147">
    <property type="term" value="P:negative regulation of fibroblast proliferation"/>
    <property type="evidence" value="ECO:0000250"/>
    <property type="project" value="BHF-UCL"/>
</dbReference>
<dbReference type="GO" id="GO:1902230">
    <property type="term" value="P:negative regulation of intrinsic apoptotic signaling pathway in response to DNA damage"/>
    <property type="evidence" value="ECO:0000314"/>
    <property type="project" value="BHF-UCL"/>
</dbReference>
<dbReference type="GO" id="GO:0034144">
    <property type="term" value="P:negative regulation of toll-like receptor 4 signaling pathway"/>
    <property type="evidence" value="ECO:0000314"/>
    <property type="project" value="UniProt"/>
</dbReference>
<dbReference type="GO" id="GO:0032897">
    <property type="term" value="P:negative regulation of viral transcription"/>
    <property type="evidence" value="ECO:0000314"/>
    <property type="project" value="UniProtKB"/>
</dbReference>
<dbReference type="GO" id="GO:2000786">
    <property type="term" value="P:positive regulation of autophagosome assembly"/>
    <property type="evidence" value="ECO:0000314"/>
    <property type="project" value="UniProt"/>
</dbReference>
<dbReference type="GO" id="GO:0010508">
    <property type="term" value="P:positive regulation of autophagy"/>
    <property type="evidence" value="ECO:0000314"/>
    <property type="project" value="UniProtKB"/>
</dbReference>
<dbReference type="GO" id="GO:0043123">
    <property type="term" value="P:positive regulation of canonical NF-kappaB signal transduction"/>
    <property type="evidence" value="ECO:0000314"/>
    <property type="project" value="UniProtKB"/>
</dbReference>
<dbReference type="GO" id="GO:0045787">
    <property type="term" value="P:positive regulation of cell cycle"/>
    <property type="evidence" value="ECO:0000314"/>
    <property type="project" value="BHF-UCL"/>
</dbReference>
<dbReference type="GO" id="GO:0030307">
    <property type="term" value="P:positive regulation of cell growth"/>
    <property type="evidence" value="ECO:0000314"/>
    <property type="project" value="BHF-UCL"/>
</dbReference>
<dbReference type="GO" id="GO:0030335">
    <property type="term" value="P:positive regulation of cell migration"/>
    <property type="evidence" value="ECO:0000314"/>
    <property type="project" value="BHF-UCL"/>
</dbReference>
<dbReference type="GO" id="GO:2000147">
    <property type="term" value="P:positive regulation of cell motility"/>
    <property type="evidence" value="ECO:0000250"/>
    <property type="project" value="BHF-UCL"/>
</dbReference>
<dbReference type="GO" id="GO:1903886">
    <property type="term" value="P:positive regulation of chemokine (C-C motif) ligand 20 production"/>
    <property type="evidence" value="ECO:0007669"/>
    <property type="project" value="Ensembl"/>
</dbReference>
<dbReference type="GO" id="GO:0051091">
    <property type="term" value="P:positive regulation of DNA-binding transcription factor activity"/>
    <property type="evidence" value="ECO:0000314"/>
    <property type="project" value="UniProtKB"/>
</dbReference>
<dbReference type="GO" id="GO:1903883">
    <property type="term" value="P:positive regulation of interleukin-17-mediated signaling pathway"/>
    <property type="evidence" value="ECO:0007669"/>
    <property type="project" value="Ensembl"/>
</dbReference>
<dbReference type="GO" id="GO:0050769">
    <property type="term" value="P:positive regulation of neurogenesis"/>
    <property type="evidence" value="ECO:0000250"/>
    <property type="project" value="BHF-UCL"/>
</dbReference>
<dbReference type="GO" id="GO:0045666">
    <property type="term" value="P:positive regulation of neuron differentiation"/>
    <property type="evidence" value="ECO:0000250"/>
    <property type="project" value="BHF-UCL"/>
</dbReference>
<dbReference type="GO" id="GO:0051092">
    <property type="term" value="P:positive regulation of NF-kappaB transcription factor activity"/>
    <property type="evidence" value="ECO:0000314"/>
    <property type="project" value="UniProtKB"/>
</dbReference>
<dbReference type="GO" id="GO:0045732">
    <property type="term" value="P:positive regulation of protein catabolic process"/>
    <property type="evidence" value="ECO:0000250"/>
    <property type="project" value="BHF-UCL"/>
</dbReference>
<dbReference type="GO" id="GO:0045862">
    <property type="term" value="P:positive regulation of proteolysis"/>
    <property type="evidence" value="ECO:0000314"/>
    <property type="project" value="BHF-UCL"/>
</dbReference>
<dbReference type="GO" id="GO:0051155">
    <property type="term" value="P:positive regulation of striated muscle cell differentiation"/>
    <property type="evidence" value="ECO:0007669"/>
    <property type="project" value="Ensembl"/>
</dbReference>
<dbReference type="GO" id="GO:1903265">
    <property type="term" value="P:positive regulation of tumor necrosis factor-mediated signaling pathway"/>
    <property type="evidence" value="ECO:0000318"/>
    <property type="project" value="GO_Central"/>
</dbReference>
<dbReference type="GO" id="GO:0070534">
    <property type="term" value="P:protein K63-linked ubiquitination"/>
    <property type="evidence" value="ECO:0000314"/>
    <property type="project" value="UniProt"/>
</dbReference>
<dbReference type="GO" id="GO:0000209">
    <property type="term" value="P:protein polyubiquitination"/>
    <property type="evidence" value="ECO:0000314"/>
    <property type="project" value="BHF-UCL"/>
</dbReference>
<dbReference type="GO" id="GO:0016567">
    <property type="term" value="P:protein ubiquitination"/>
    <property type="evidence" value="ECO:0000314"/>
    <property type="project" value="BHF-UCL"/>
</dbReference>
<dbReference type="GO" id="GO:0006979">
    <property type="term" value="P:response to oxidative stress"/>
    <property type="evidence" value="ECO:0000314"/>
    <property type="project" value="UniProt"/>
</dbReference>
<dbReference type="GO" id="GO:0042594">
    <property type="term" value="P:response to starvation"/>
    <property type="evidence" value="ECO:0000314"/>
    <property type="project" value="UniProt"/>
</dbReference>
<dbReference type="GO" id="GO:0034612">
    <property type="term" value="P:response to tumor necrosis factor"/>
    <property type="evidence" value="ECO:0000250"/>
    <property type="project" value="BHF-UCL"/>
</dbReference>
<dbReference type="GO" id="GO:0009411">
    <property type="term" value="P:response to UV"/>
    <property type="evidence" value="ECO:0000250"/>
    <property type="project" value="BHF-UCL"/>
</dbReference>
<dbReference type="GO" id="GO:0044790">
    <property type="term" value="P:suppression of viral release by host"/>
    <property type="evidence" value="ECO:0000314"/>
    <property type="project" value="UniProtKB"/>
</dbReference>
<dbReference type="GO" id="GO:0001894">
    <property type="term" value="P:tissue homeostasis"/>
    <property type="evidence" value="ECO:0007669"/>
    <property type="project" value="Ensembl"/>
</dbReference>
<dbReference type="GO" id="GO:0006511">
    <property type="term" value="P:ubiquitin-dependent protein catabolic process"/>
    <property type="evidence" value="ECO:0000315"/>
    <property type="project" value="UniProtKB"/>
</dbReference>
<dbReference type="CDD" id="cd19806">
    <property type="entry name" value="Bbox1_TRIM32_C-VII"/>
    <property type="match status" value="1"/>
</dbReference>
<dbReference type="CDD" id="cd14961">
    <property type="entry name" value="NHL_TRIM32_like"/>
    <property type="match status" value="1"/>
</dbReference>
<dbReference type="CDD" id="cd16587">
    <property type="entry name" value="RING-HC_TRIM32_C-VII"/>
    <property type="match status" value="1"/>
</dbReference>
<dbReference type="FunFam" id="2.120.10.30:FF:000034">
    <property type="entry name" value="E3 ubiquitin-protein ligase TRIM32"/>
    <property type="match status" value="1"/>
</dbReference>
<dbReference type="FunFam" id="2.120.10.30:FF:000039">
    <property type="entry name" value="E3 ubiquitin-protein ligase TRIM32"/>
    <property type="match status" value="1"/>
</dbReference>
<dbReference type="FunFam" id="3.30.40.10:FF:000314">
    <property type="entry name" value="E3 ubiquitin-protein ligase TRIM32"/>
    <property type="match status" value="1"/>
</dbReference>
<dbReference type="Gene3D" id="3.30.160.60">
    <property type="entry name" value="Classic Zinc Finger"/>
    <property type="match status" value="1"/>
</dbReference>
<dbReference type="Gene3D" id="2.120.10.30">
    <property type="entry name" value="TolB, C-terminal domain"/>
    <property type="match status" value="2"/>
</dbReference>
<dbReference type="Gene3D" id="3.30.40.10">
    <property type="entry name" value="Zinc/RING finger domain, C3HC4 (zinc finger)"/>
    <property type="match status" value="1"/>
</dbReference>
<dbReference type="InterPro" id="IPR011042">
    <property type="entry name" value="6-blade_b-propeller_TolB-like"/>
</dbReference>
<dbReference type="InterPro" id="IPR001258">
    <property type="entry name" value="NHL_repeat"/>
</dbReference>
<dbReference type="InterPro" id="IPR047051">
    <property type="entry name" value="TRIM32_Bbox1_Znf"/>
</dbReference>
<dbReference type="InterPro" id="IPR027370">
    <property type="entry name" value="Znf-RING_euk"/>
</dbReference>
<dbReference type="InterPro" id="IPR000315">
    <property type="entry name" value="Znf_B-box"/>
</dbReference>
<dbReference type="InterPro" id="IPR001841">
    <property type="entry name" value="Znf_RING"/>
</dbReference>
<dbReference type="InterPro" id="IPR013083">
    <property type="entry name" value="Znf_RING/FYVE/PHD"/>
</dbReference>
<dbReference type="InterPro" id="IPR017907">
    <property type="entry name" value="Znf_RING_CS"/>
</dbReference>
<dbReference type="PANTHER" id="PTHR25464:SF3">
    <property type="entry name" value="E3 UBIQUITIN-PROTEIN LIGASE TRIM32"/>
    <property type="match status" value="1"/>
</dbReference>
<dbReference type="PANTHER" id="PTHR25464">
    <property type="entry name" value="TRIPARTITE MOTIF-CONTAINING PROTEIN 2-LIKE PROTEIN"/>
    <property type="match status" value="1"/>
</dbReference>
<dbReference type="Pfam" id="PF01436">
    <property type="entry name" value="NHL"/>
    <property type="match status" value="3"/>
</dbReference>
<dbReference type="Pfam" id="PF13445">
    <property type="entry name" value="zf-RING_UBOX"/>
    <property type="match status" value="1"/>
</dbReference>
<dbReference type="SMART" id="SM00336">
    <property type="entry name" value="BBOX"/>
    <property type="match status" value="1"/>
</dbReference>
<dbReference type="SMART" id="SM00184">
    <property type="entry name" value="RING"/>
    <property type="match status" value="1"/>
</dbReference>
<dbReference type="SUPFAM" id="SSF57845">
    <property type="entry name" value="B-box zinc-binding domain"/>
    <property type="match status" value="1"/>
</dbReference>
<dbReference type="SUPFAM" id="SSF101898">
    <property type="entry name" value="NHL repeat"/>
    <property type="match status" value="1"/>
</dbReference>
<dbReference type="SUPFAM" id="SSF57850">
    <property type="entry name" value="RING/U-box"/>
    <property type="match status" value="1"/>
</dbReference>
<dbReference type="PROSITE" id="PS51125">
    <property type="entry name" value="NHL"/>
    <property type="match status" value="5"/>
</dbReference>
<dbReference type="PROSITE" id="PS50119">
    <property type="entry name" value="ZF_BBOX"/>
    <property type="match status" value="1"/>
</dbReference>
<dbReference type="PROSITE" id="PS00518">
    <property type="entry name" value="ZF_RING_1"/>
    <property type="match status" value="1"/>
</dbReference>
<dbReference type="PROSITE" id="PS50089">
    <property type="entry name" value="ZF_RING_2"/>
    <property type="match status" value="1"/>
</dbReference>
<evidence type="ECO:0000250" key="1">
    <source>
        <dbReference type="UniProtKB" id="Q8CH72"/>
    </source>
</evidence>
<evidence type="ECO:0000255" key="2"/>
<evidence type="ECO:0000255" key="3">
    <source>
        <dbReference type="PROSITE-ProRule" id="PRU00024"/>
    </source>
</evidence>
<evidence type="ECO:0000255" key="4">
    <source>
        <dbReference type="PROSITE-ProRule" id="PRU00175"/>
    </source>
</evidence>
<evidence type="ECO:0000269" key="5">
    <source>
    </source>
</evidence>
<evidence type="ECO:0000269" key="6">
    <source>
    </source>
</evidence>
<evidence type="ECO:0000269" key="7">
    <source>
    </source>
</evidence>
<evidence type="ECO:0000269" key="8">
    <source>
    </source>
</evidence>
<evidence type="ECO:0000269" key="9">
    <source>
    </source>
</evidence>
<evidence type="ECO:0000269" key="10">
    <source>
    </source>
</evidence>
<evidence type="ECO:0000269" key="11">
    <source>
    </source>
</evidence>
<evidence type="ECO:0000269" key="12">
    <source>
    </source>
</evidence>
<evidence type="ECO:0000269" key="13">
    <source>
    </source>
</evidence>
<evidence type="ECO:0000269" key="14">
    <source>
    </source>
</evidence>
<evidence type="ECO:0000269" key="15">
    <source>
    </source>
</evidence>
<evidence type="ECO:0000269" key="16">
    <source>
    </source>
</evidence>
<evidence type="ECO:0000269" key="17">
    <source>
    </source>
</evidence>
<evidence type="ECO:0000269" key="18">
    <source>
    </source>
</evidence>
<evidence type="ECO:0000269" key="19">
    <source>
    </source>
</evidence>
<evidence type="ECO:0000269" key="20">
    <source>
    </source>
</evidence>
<evidence type="ECO:0000269" key="21">
    <source ref="4"/>
</evidence>
<evidence type="ECO:0000305" key="22"/>
<evidence type="ECO:0000312" key="23">
    <source>
        <dbReference type="HGNC" id="HGNC:16380"/>
    </source>
</evidence>
<evidence type="ECO:0007744" key="24">
    <source>
    </source>
</evidence>
<evidence type="ECO:0007829" key="25">
    <source>
        <dbReference type="PDB" id="2CT2"/>
    </source>
</evidence>
<evidence type="ECO:0007829" key="26">
    <source>
        <dbReference type="PDB" id="5FEY"/>
    </source>
</evidence>
<proteinExistence type="evidence at protein level"/>
<sequence length="653" mass="71989">MAAAAASHLNLDALREVLECPICMESFTEEQLRPKLLHCGHTICRQCLEKLLASSINGVRCPFCSKITRITSLTQLTDNLTVLKIIDTAGLSEAVGLLMCRSCGRRLPRQFCRSCGLVLCEPCREADHQPPGHCTLPVKEAAEERRRDFGEKLTRLRELMGELQRRKAALEGVSKDLQARYKAVLQEYGHEERRVQDELARSRKFFTGSLAEVEKSNSQVVEEQSYLLNIAEVQAVSRCDYFLAKIKQADVALLEETADEEEPELTASLPRELTLQDVELLKVGHVGPLQIGQAVKKPRTVNVEDSWAMEATASAASTSVTFREMDMSPEEVVASPRASPAKQRGPEAASNIQQCLFLKKMGAKGSTPGMFNLPVSLYVTSQGEVLVADRGNYRIQVFTRKGFLKEIRRSPSGIDSFVLSFLGADLPNLTPLSVAMNCQGLIGVTDSYDNSLKVYTLDGHCVACHRSQLSKPWGITALPSGQFVVTDVEGGKLWCFTVDRGSGVVKYSCLCSAVRPKFVTCDAEGTVYFTQGLGLNLENRQNEHHLEGGFSIGSVGPDGQLGRQISHFFSENEDFRCIAGMCVDARGDLIVADSSRKEILHFPKGGGYSVLIREGLTCPVGIALTPKGQLLVLDCWDHCIKIYSYHLRRYSTP</sequence>
<gene>
    <name evidence="23" type="primary">TRIM32</name>
    <name type="synonym">HT2A</name>
</gene>
<comment type="function">
    <text evidence="1 8 10 11 12 14 15 16 17 18 19">E3 ubiquitin ligase that plays a role in various biological processes including neural stem cell differentiation, innate immunity, inflammatory resonse and autophagy (PubMed:19349376, PubMed:31123703). Plays a role in virus-triggered induction of IFN-beta and TNF-alpha by mediating the ubiquitination of STING1. Mechanistically, targets STING1 for 'Lys-63'-linked ubiquitination which promotes the interaction of STING1 with TBK1 (PubMed:22745133). Regulates bacterial clearance and promotes autophagy in Mycobacterium tuberculosis-infected macrophages (PubMed:37543647). Negatively regulates TLR3/4-mediated innate immune and inflammatory response by triggering the autophagic degradation of TICAM1 in an E3 activity-independent manner (PubMed:28898289). Plays an essential role in oxidative stress induced cell death by inducing loss of transmembrane potential and enhancing mitochondrial reactive oxygen species (ROS) production during oxidative stress conditions (PubMed:32918979). Ubiquitinates XIAP and targets it for proteasomal degradation (PubMed:21628460). Ubiquitinates DTNBP1 (dysbindin) and promotes its degradation (PubMed:19349376). May ubiquitinate BBS2 (PubMed:22500027). Ubiquitinates PIAS4/PIASY and promotes its degradation in keratinocytes treated with UVB and TNF-alpha (By similarity). Also acts as a regulator of autophagy by mediating formation of unanchored 'Lys-63'-linked polyubiquitin chains that activate ULK1: interaction with AMBRA1 is required for ULK1 activation (PubMed:31123703). Positively regulates dendritic branching by promoting ubiquitination and subsequent degradation of the epigenetic factor CDYL (PubMed:34888944). Under metabolic stress and phosphorylation by CHK2, mediates 'Lys-63'-linked ubiquitination of ATG7 at 'Lys-45' to initiate autophagy (PubMed:37943659).</text>
</comment>
<comment type="function">
    <text evidence="20">(Microbial infection) May play a significant role in mediating the biological activity of the HIV-1 Tat protein in vivo (PubMed:7778269). Binds specifically to the activation domain of HIV-1 Tat and can also interact with the HIV-2 and EIAV Tat proteins in vivo (PubMed:7778269).</text>
</comment>
<comment type="catalytic activity">
    <reaction evidence="8 10 12 15 19">
        <text>S-ubiquitinyl-[E2 ubiquitin-conjugating enzyme]-L-cysteine + [acceptor protein]-L-lysine = [E2 ubiquitin-conjugating enzyme]-L-cysteine + N(6)-ubiquitinyl-[acceptor protein]-L-lysine.</text>
        <dbReference type="EC" id="2.3.2.27"/>
    </reaction>
</comment>
<comment type="pathway">
    <text evidence="8 15 19">Protein modification; protein ubiquitination.</text>
</comment>
<comment type="subunit">
    <text evidence="1 8 14 15">It self-associates (PubMed:19349376). Interacts with DTNBP1 (PubMed:19349376). Interacts with PIAS4/PIASY upon treatment with UVB and TNF-alpha (By similarity). Interacts with AMBRA1; promoting activation of ULK1 through unanchored 'Lys-63'-linked polyubiquitin chains (PubMed:31123703). Interacts with TICAM1 and TAX1BP1; these interactions target TICAM1 to TAX1BP1-mediated selective autophagic degradation (PubMed:28898289).</text>
</comment>
<comment type="subunit">
    <text evidence="13">(Microbial infection) Interacts with S.typhimurium protein SseK3; SseK3 does not glycosylate TRIM32.</text>
</comment>
<comment type="interaction">
    <interactant intactId="EBI-742790">
        <id>Q13049</id>
    </interactant>
    <interactant intactId="EBI-743598">
        <id>Q9NYB9</id>
        <label>ABI2</label>
    </interactant>
    <organismsDiffer>false</organismsDiffer>
    <experiments>8</experiments>
</comment>
<comment type="interaction">
    <interactant intactId="EBI-742790">
        <id>Q13049</id>
    </interactant>
    <interactant intactId="EBI-11096309">
        <id>Q9NYB9-2</id>
        <label>ABI2</label>
    </interactant>
    <organismsDiffer>false</organismsDiffer>
    <experiments>8</experiments>
</comment>
<comment type="interaction">
    <interactant intactId="EBI-742790">
        <id>Q13049</id>
    </interactant>
    <interactant intactId="EBI-711399">
        <id>Q9H8T0</id>
        <label>AKTIP</label>
    </interactant>
    <organismsDiffer>false</organismsDiffer>
    <experiments>3</experiments>
</comment>
<comment type="interaction">
    <interactant intactId="EBI-742790">
        <id>Q13049</id>
    </interactant>
    <interactant intactId="EBI-930964">
        <id>P54253</id>
        <label>ATXN1</label>
    </interactant>
    <organismsDiffer>false</organismsDiffer>
    <experiments>5</experiments>
</comment>
<comment type="interaction">
    <interactant intactId="EBI-742790">
        <id>Q13049</id>
    </interactant>
    <interactant intactId="EBI-349854">
        <id>P13569</id>
        <label>CFTR</label>
    </interactant>
    <organismsDiffer>false</organismsDiffer>
    <experiments>5</experiments>
</comment>
<comment type="interaction">
    <interactant intactId="EBI-742790">
        <id>Q13049</id>
    </interactant>
    <interactant intactId="EBI-5655540">
        <id>Q8N3C7</id>
        <label>CLIP4</label>
    </interactant>
    <organismsDiffer>false</organismsDiffer>
    <experiments>6</experiments>
</comment>
<comment type="interaction">
    <interactant intactId="EBI-742790">
        <id>Q13049</id>
    </interactant>
    <interactant intactId="EBI-398977">
        <id>Q9BUN8</id>
        <label>DERL1</label>
    </interactant>
    <organismsDiffer>false</organismsDiffer>
    <experiments>3</experiments>
</comment>
<comment type="interaction">
    <interactant intactId="EBI-742790">
        <id>Q13049</id>
    </interactant>
    <interactant intactId="EBI-781551">
        <id>Q9Y282</id>
        <label>ERGIC3</label>
    </interactant>
    <organismsDiffer>false</organismsDiffer>
    <experiments>3</experiments>
</comment>
<comment type="interaction">
    <interactant intactId="EBI-742790">
        <id>Q13049</id>
    </interactant>
    <interactant intactId="EBI-3943864">
        <id>Q8N9I5</id>
        <label>FADS6</label>
    </interactant>
    <organismsDiffer>false</organismsDiffer>
    <experiments>3</experiments>
</comment>
<comment type="interaction">
    <interactant intactId="EBI-742790">
        <id>Q13049</id>
    </interactant>
    <interactant intactId="EBI-744104">
        <id>P55040</id>
        <label>GEM</label>
    </interactant>
    <organismsDiffer>false</organismsDiffer>
    <experiments>3</experiments>
</comment>
<comment type="interaction">
    <interactant intactId="EBI-742790">
        <id>Q13049</id>
    </interactant>
    <interactant intactId="EBI-18945347">
        <id>O60478</id>
        <label>GPR137B</label>
    </interactant>
    <organismsDiffer>false</organismsDiffer>
    <experiments>3</experiments>
</comment>
<comment type="interaction">
    <interactant intactId="EBI-742790">
        <id>Q13049</id>
    </interactant>
    <interactant intactId="EBI-11721771">
        <id>O60725</id>
        <label>ICMT</label>
    </interactant>
    <organismsDiffer>false</organismsDiffer>
    <experiments>3</experiments>
</comment>
<comment type="interaction">
    <interactant intactId="EBI-742790">
        <id>Q13049</id>
    </interactant>
    <interactant intactId="EBI-4397613">
        <id>Q7L273</id>
        <label>KCTD9</label>
    </interactant>
    <organismsDiffer>false</organismsDiffer>
    <experiments>6</experiments>
</comment>
<comment type="interaction">
    <interactant intactId="EBI-742790">
        <id>Q13049</id>
    </interactant>
    <interactant intactId="EBI-11911016">
        <id>P80188</id>
        <label>LCN2</label>
    </interactant>
    <organismsDiffer>false</organismsDiffer>
    <experiments>3</experiments>
</comment>
<comment type="interaction">
    <interactant intactId="EBI-742790">
        <id>Q13049</id>
    </interactant>
    <interactant intactId="EBI-748229">
        <id>Q9H8S9</id>
        <label>MOB1A</label>
    </interactant>
    <organismsDiffer>false</organismsDiffer>
    <experiments>3</experiments>
</comment>
<comment type="interaction">
    <interactant intactId="EBI-742790">
        <id>Q13049</id>
    </interactant>
    <interactant intactId="EBI-741158">
        <id>Q96HA8</id>
        <label>NTAQ1</label>
    </interactant>
    <organismsDiffer>false</organismsDiffer>
    <experiments>3</experiments>
</comment>
<comment type="interaction">
    <interactant intactId="EBI-742790">
        <id>Q13049</id>
    </interactant>
    <interactant intactId="EBI-742764">
        <id>O76083</id>
        <label>PDE9A</label>
    </interactant>
    <organismsDiffer>false</organismsDiffer>
    <experiments>10</experiments>
</comment>
<comment type="interaction">
    <interactant intactId="EBI-742790">
        <id>Q13049</id>
    </interactant>
    <interactant intactId="EBI-11524542">
        <id>O76083-2</id>
        <label>PDE9A</label>
    </interactant>
    <organismsDiffer>false</organismsDiffer>
    <experiments>10</experiments>
</comment>
<comment type="interaction">
    <interactant intactId="EBI-742790">
        <id>Q13049</id>
    </interactant>
    <interactant intactId="EBI-16433425">
        <id>O76083-4</id>
        <label>PDE9A</label>
    </interactant>
    <organismsDiffer>false</organismsDiffer>
    <experiments>3</experiments>
</comment>
<comment type="interaction">
    <interactant intactId="EBI-742790">
        <id>Q13049</id>
    </interactant>
    <interactant intactId="EBI-448407">
        <id>Q9HAT8</id>
        <label>PELI2</label>
    </interactant>
    <organismsDiffer>false</organismsDiffer>
    <experiments>3</experiments>
</comment>
<comment type="interaction">
    <interactant intactId="EBI-742790">
        <id>Q13049</id>
    </interactant>
    <interactant intactId="EBI-12154567">
        <id>Q8WV60</id>
        <label>PTCD2</label>
    </interactant>
    <organismsDiffer>false</organismsDiffer>
    <experiments>3</experiments>
</comment>
<comment type="interaction">
    <interactant intactId="EBI-742790">
        <id>Q13049</id>
    </interactant>
    <interactant intactId="EBI-297779">
        <id>Q06124</id>
        <label>PTPN11</label>
    </interactant>
    <organismsDiffer>false</organismsDiffer>
    <experiments>5</experiments>
</comment>
<comment type="interaction">
    <interactant intactId="EBI-742790">
        <id>Q13049</id>
    </interactant>
    <interactant intactId="EBI-372165">
        <id>O14966</id>
        <label>RAB29</label>
    </interactant>
    <organismsDiffer>false</organismsDiffer>
    <experiments>3</experiments>
</comment>
<comment type="interaction">
    <interactant intactId="EBI-742790">
        <id>Q13049</id>
    </interactant>
    <interactant intactId="EBI-712367">
        <id>Q9UI14</id>
        <label>RABAC1</label>
    </interactant>
    <organismsDiffer>false</organismsDiffer>
    <experiments>10</experiments>
</comment>
<comment type="interaction">
    <interactant intactId="EBI-742790">
        <id>Q13049</id>
    </interactant>
    <interactant intactId="EBI-7797649">
        <id>P11684</id>
        <label>SCGB1A1</label>
    </interactant>
    <organismsDiffer>false</organismsDiffer>
    <experiments>8</experiments>
</comment>
<comment type="interaction">
    <interactant intactId="EBI-742790">
        <id>Q13049</id>
    </interactant>
    <interactant intactId="EBI-727004">
        <id>O00560</id>
        <label>SDCBP</label>
    </interactant>
    <organismsDiffer>false</organismsDiffer>
    <experiments>7</experiments>
</comment>
<comment type="interaction">
    <interactant intactId="EBI-742790">
        <id>Q13049</id>
    </interactant>
    <interactant intactId="EBI-1767971">
        <id>Q9Y6Y8</id>
        <label>SEC23IP</label>
    </interactant>
    <organismsDiffer>false</organismsDiffer>
    <experiments>2</experiments>
</comment>
<comment type="interaction">
    <interactant intactId="EBI-742790">
        <id>Q13049</id>
    </interactant>
    <interactant intactId="EBI-10246152">
        <id>Q5T7P8-2</id>
        <label>SYT6</label>
    </interactant>
    <organismsDiffer>false</organismsDiffer>
    <experiments>6</experiments>
</comment>
<comment type="interaction">
    <interactant intactId="EBI-742790">
        <id>Q13049</id>
    </interactant>
    <interactant intactId="EBI-11955057">
        <id>Q8N8B7-2</id>
        <label>TCEANC</label>
    </interactant>
    <organismsDiffer>false</organismsDiffer>
    <experiments>3</experiments>
</comment>
<comment type="interaction">
    <interactant intactId="EBI-742790">
        <id>Q13049</id>
    </interactant>
    <interactant intactId="EBI-742790">
        <id>Q13049</id>
        <label>TRIM32</label>
    </interactant>
    <organismsDiffer>false</organismsDiffer>
    <experiments>5</experiments>
</comment>
<comment type="interaction">
    <interactant intactId="EBI-742790">
        <id>Q13049</id>
    </interactant>
    <interactant intactId="EBI-924214">
        <id>Q9C035</id>
        <label>TRIM5</label>
    </interactant>
    <organismsDiffer>false</organismsDiffer>
    <experiments>2</experiments>
</comment>
<comment type="interaction">
    <interactant intactId="EBI-742790">
        <id>Q13049</id>
    </interactant>
    <interactant intactId="EBI-9090990">
        <id>Q5W5X9-3</id>
        <label>TTC23</label>
    </interactant>
    <organismsDiffer>false</organismsDiffer>
    <experiments>3</experiments>
</comment>
<comment type="interaction">
    <interactant intactId="EBI-742790">
        <id>Q13049</id>
    </interactant>
    <interactant intactId="EBI-1052908">
        <id>P61088</id>
        <label>UBE2N</label>
    </interactant>
    <organismsDiffer>false</organismsDiffer>
    <experiments>3</experiments>
</comment>
<comment type="interaction">
    <interactant intactId="EBI-742790">
        <id>Q13049</id>
    </interactant>
    <interactant intactId="EBI-2130181">
        <id>Q5VVX9</id>
        <label>UBE2U</label>
    </interactant>
    <organismsDiffer>false</organismsDiffer>
    <experiments>4</experiments>
</comment>
<comment type="interaction">
    <interactant intactId="EBI-742790">
        <id>Q13049</id>
    </interactant>
    <interactant intactId="EBI-1050671">
        <id>Q13404</id>
        <label>UBE2V1</label>
    </interactant>
    <organismsDiffer>false</organismsDiffer>
    <experiments>4</experiments>
</comment>
<comment type="interaction">
    <interactant intactId="EBI-742790">
        <id>Q13049</id>
    </interactant>
    <interactant intactId="EBI-741480">
        <id>Q9UMX0</id>
        <label>UBQLN1</label>
    </interactant>
    <organismsDiffer>false</organismsDiffer>
    <experiments>7</experiments>
</comment>
<comment type="interaction">
    <interactant intactId="EBI-742790">
        <id>Q13049</id>
    </interactant>
    <interactant intactId="EBI-10173939">
        <id>Q9UMX0-2</id>
        <label>UBQLN1</label>
    </interactant>
    <organismsDiffer>false</organismsDiffer>
    <experiments>3</experiments>
</comment>
<comment type="interaction">
    <interactant intactId="EBI-742790">
        <id>Q13049</id>
    </interactant>
    <interactant intactId="EBI-947187">
        <id>Q9UHD9</id>
        <label>UBQLN2</label>
    </interactant>
    <organismsDiffer>false</organismsDiffer>
    <experiments>3</experiments>
</comment>
<comment type="interaction">
    <interactant intactId="EBI-742790">
        <id>Q13049</id>
    </interactant>
    <interactant intactId="EBI-711226">
        <id>Q9NRR5</id>
        <label>UBQLN4</label>
    </interactant>
    <organismsDiffer>false</organismsDiffer>
    <experiments>3</experiments>
</comment>
<comment type="interaction">
    <interactant intactId="EBI-742790">
        <id>Q13049</id>
    </interactant>
    <interactant intactId="EBI-10175879">
        <id>B3KPU6</id>
    </interactant>
    <organismsDiffer>false</organismsDiffer>
    <experiments>3</experiments>
</comment>
<comment type="interaction">
    <interactant intactId="EBI-742790">
        <id>Q13049</id>
    </interactant>
    <interactant intactId="EBI-6117042">
        <id>Q99J34</id>
        <label>Irak1</label>
    </interactant>
    <organismsDiffer>true</organismsDiffer>
    <experiments>2</experiments>
</comment>
<comment type="interaction">
    <interactant intactId="EBI-742790">
        <id>Q13049</id>
    </interactant>
    <interactant intactId="EBI-25492395">
        <id>PRO_0000449633</id>
        <label>rep</label>
        <dbReference type="UniProtKB" id="P0DTD1"/>
    </interactant>
    <organismsDiffer>true</organismsDiffer>
    <experiments>4</experiments>
</comment>
<comment type="subcellular location">
    <subcellularLocation>
        <location evidence="8 18">Cytoplasm</location>
    </subcellularLocation>
    <subcellularLocation>
        <location evidence="12 16">Mitochondrion</location>
    </subcellularLocation>
    <subcellularLocation>
        <location evidence="12">Endoplasmic reticulum</location>
    </subcellularLocation>
    <text evidence="8">Localized in cytoplasmic bodies, often located around the nucleus.</text>
</comment>
<comment type="tissue specificity">
    <text evidence="5">Spleen, thymus, prostate, testis, ovary, intestine, colon and skeletal muscle.</text>
</comment>
<comment type="PTM">
    <text evidence="8">Ubiquitinated.</text>
</comment>
<comment type="PTM">
    <text evidence="19">Phosphorylation at Ser-55 by CHEK2 under oxidative stress, activates the E3 ligase activity and promotes ATG7 ubiquitination leading to positive regulation of the autophagosme assembly.</text>
</comment>
<comment type="disease" evidence="5 7">
    <disease id="DI-00665">
        <name>Muscular dystrophy, limb-girdle, autosomal recessive 8</name>
        <acronym>LGMDR8</acronym>
        <description>An autosomal recessive degenerative myopathy characterized by pelvic girdle, shoulder girdle and quadriceps muscle weakness. Clinical phenotype and severity are highly variable. Disease progression is slow and most patients remain ambulatory into the sixth decade of life.</description>
        <dbReference type="MIM" id="254110"/>
    </disease>
    <text>The disease is caused by variants affecting the gene represented in this entry.</text>
</comment>
<comment type="disease" evidence="6">
    <disease id="DI-00169">
        <name>Bardet-Biedl syndrome 11</name>
        <acronym>BBS11</acronym>
        <description>A syndrome characterized by usually severe pigmentary retinopathy, early-onset obesity, polydactyly, hypogenitalism, renal malformation and intellectual disability. Secondary features include diabetes mellitus, hypertension and congenital heart disease. Bardet-Biedl syndrome inheritance is autosomal recessive, but three mutated alleles (two at one locus, and a third at a second locus) may be required for clinical manifestation of some forms of the disease.</description>
        <dbReference type="MIM" id="615988"/>
    </disease>
    <text evidence="11">The disease is caused by variants affecting the gene represented in this entry. It has been suggested that TRIM32 might be the E3 ubiquitin ligase for BBS2, a component of the BBSome complex involved in ciliogenesis, that is ubiquitinated and degraded by the proteasome (PubMed:22500027).</text>
</comment>
<comment type="similarity">
    <text evidence="22">Belongs to the TRIM/RBCC family.</text>
</comment>
<comment type="online information" name="Leiden Muscular Dystrophy pages">
    <link uri="https://www.dmd.nl/trim32_home.html"/>
    <text>TRIM32</text>
</comment>
<keyword id="KW-0002">3D-structure</keyword>
<keyword id="KW-0007">Acetylation</keyword>
<keyword id="KW-0083">Bardet-Biedl syndrome</keyword>
<keyword id="KW-1186">Ciliopathy</keyword>
<keyword id="KW-0175">Coiled coil</keyword>
<keyword id="KW-0963">Cytoplasm</keyword>
<keyword id="KW-0903">Direct protein sequencing</keyword>
<keyword id="KW-0225">Disease variant</keyword>
<keyword id="KW-0256">Endoplasmic reticulum</keyword>
<keyword id="KW-0991">Intellectual disability</keyword>
<keyword id="KW-0947">Limb-girdle muscular dystrophy</keyword>
<keyword id="KW-0479">Metal-binding</keyword>
<keyword id="KW-0496">Mitochondrion</keyword>
<keyword id="KW-0550">Obesity</keyword>
<keyword id="KW-0597">Phosphoprotein</keyword>
<keyword id="KW-1267">Proteomics identification</keyword>
<keyword id="KW-1185">Reference proteome</keyword>
<keyword id="KW-0677">Repeat</keyword>
<keyword id="KW-0808">Transferase</keyword>
<keyword id="KW-0832">Ubl conjugation</keyword>
<keyword id="KW-0833">Ubl conjugation pathway</keyword>
<keyword id="KW-0862">Zinc</keyword>
<keyword id="KW-0863">Zinc-finger</keyword>
<name>TRI32_HUMAN</name>
<protein>
    <recommendedName>
        <fullName evidence="22">E3 ubiquitin-protein ligase TRIM32</fullName>
        <ecNumber evidence="8 10 12 15">2.3.2.27</ecNumber>
    </recommendedName>
    <alternativeName>
        <fullName>72 kDa Tat-interacting protein</fullName>
    </alternativeName>
    <alternativeName>
        <fullName evidence="22">RING-type E3 ubiquitin transferase TRIM32</fullName>
    </alternativeName>
    <alternativeName>
        <fullName>Tripartite motif-containing protein 32</fullName>
    </alternativeName>
    <alternativeName>
        <fullName>Zinc finger protein HT2A</fullName>
    </alternativeName>
</protein>
<feature type="initiator methionine" description="Removed" evidence="21">
    <location>
        <position position="1"/>
    </location>
</feature>
<feature type="chain" id="PRO_0000056246" description="E3 ubiquitin-protein ligase TRIM32">
    <location>
        <begin position="2"/>
        <end position="653"/>
    </location>
</feature>
<feature type="repeat" description="NHL 1">
    <location>
        <begin position="358"/>
        <end position="401"/>
    </location>
</feature>
<feature type="repeat" description="NHL 2">
    <location>
        <begin position="415"/>
        <end position="458"/>
    </location>
</feature>
<feature type="repeat" description="NHL 3">
    <location>
        <begin position="459"/>
        <end position="499"/>
    </location>
</feature>
<feature type="repeat" description="NHL 4">
    <location>
        <begin position="562"/>
        <end position="605"/>
    </location>
</feature>
<feature type="repeat" description="NHL 5">
    <location>
        <begin position="606"/>
        <end position="646"/>
    </location>
</feature>
<feature type="zinc finger region" description="RING-type" evidence="4">
    <location>
        <begin position="20"/>
        <end position="65"/>
    </location>
</feature>
<feature type="zinc finger region" description="B box-type" evidence="3">
    <location>
        <begin position="103"/>
        <end position="133"/>
    </location>
</feature>
<feature type="coiled-coil region" evidence="2">
    <location>
        <begin position="138"/>
        <end position="197"/>
    </location>
</feature>
<feature type="binding site" evidence="3">
    <location>
        <position position="100"/>
    </location>
    <ligand>
        <name>Zn(2+)</name>
        <dbReference type="ChEBI" id="CHEBI:29105"/>
    </ligand>
</feature>
<feature type="binding site" evidence="3">
    <location>
        <position position="103"/>
    </location>
    <ligand>
        <name>Zn(2+)</name>
        <dbReference type="ChEBI" id="CHEBI:29105"/>
    </ligand>
</feature>
<feature type="binding site" evidence="3">
    <location>
        <position position="123"/>
    </location>
    <ligand>
        <name>Zn(2+)</name>
        <dbReference type="ChEBI" id="CHEBI:29105"/>
    </ligand>
</feature>
<feature type="binding site" evidence="3">
    <location>
        <position position="128"/>
    </location>
    <ligand>
        <name>Zn(2+)</name>
        <dbReference type="ChEBI" id="CHEBI:29105"/>
    </ligand>
</feature>
<feature type="modified residue" description="N-acetylalanine" evidence="21">
    <location>
        <position position="2"/>
    </location>
</feature>
<feature type="modified residue" description="Phosphoserine; by CHEK2" evidence="19">
    <location>
        <position position="55"/>
    </location>
</feature>
<feature type="modified residue" description="Phosphoserine" evidence="1">
    <location>
        <position position="328"/>
    </location>
</feature>
<feature type="modified residue" description="Phosphoserine" evidence="24">
    <location>
        <position position="335"/>
    </location>
</feature>
<feature type="modified residue" description="Phosphoserine" evidence="24">
    <location>
        <position position="339"/>
    </location>
</feature>
<feature type="sequence variant" id="VAR_038807" description="In BBS11; dbSNP:rs111033571." evidence="6">
    <original>P</original>
    <variation>S</variation>
    <location>
        <position position="130"/>
    </location>
</feature>
<feature type="sequence variant" id="VAR_038808" description="In dbSNP:rs3747834.">
    <original>T</original>
    <variation>R</variation>
    <location>
        <position position="257"/>
    </location>
</feature>
<feature type="sequence variant" id="VAR_066295" description="In a patient with Bardet-Biedl syndrome; uncertain significance; dbSNP:rs766439806." evidence="9">
    <original>R</original>
    <variation>Q</variation>
    <location>
        <position position="299"/>
    </location>
</feature>
<feature type="sequence variant" id="VAR_042939" description="In LGMDR8; dbSNP:rs121434447." evidence="7">
    <original>R</original>
    <variation>H</variation>
    <location>
        <position position="394"/>
    </location>
</feature>
<feature type="sequence variant" id="VAR_038809" description="In dbSNP:rs3747835.">
    <original>R</original>
    <variation>C</variation>
    <location>
        <position position="408"/>
    </location>
</feature>
<feature type="sequence variant" id="VAR_018725" description="In LGMDR8; dbSNP:rs111033570." evidence="5">
    <original>D</original>
    <variation>N</variation>
    <location>
        <position position="487"/>
    </location>
</feature>
<feature type="sequence variant" id="VAR_042940" description="In LGMDR8." evidence="7">
    <location>
        <position position="588"/>
    </location>
</feature>
<feature type="mutagenesis site" description="Abolished E3 ubiquitin ligase activity and ability to activate ULK1. Impairs ATG7 ubiquitination." evidence="15 18 19">
    <original>C</original>
    <variation>S</variation>
    <location>
        <position position="39"/>
    </location>
</feature>
<feature type="mutagenesis site" description="Increases the apoptotic cell death induced by glucose starvation." evidence="19">
    <original>S</original>
    <variation>A</variation>
    <location>
        <position position="55"/>
    </location>
</feature>
<feature type="mutagenesis site" description="Decreases the apoptotic cell death induced by glucose starvation." evidence="19">
    <original>S</original>
    <variation>D</variation>
    <location>
        <position position="55"/>
    </location>
</feature>
<feature type="sequence conflict" description="In Ref. 1; AAA86474." evidence="22" ref="1">
    <original>F</original>
    <variation>I</variation>
    <location>
        <position position="27"/>
    </location>
</feature>
<feature type="helix" evidence="26">
    <location>
        <begin position="11"/>
        <end position="16"/>
    </location>
</feature>
<feature type="turn" evidence="26">
    <location>
        <begin position="21"/>
        <end position="23"/>
    </location>
</feature>
<feature type="strand" evidence="26">
    <location>
        <begin position="34"/>
        <end position="36"/>
    </location>
</feature>
<feature type="strand" evidence="25">
    <location>
        <begin position="38"/>
        <end position="40"/>
    </location>
</feature>
<feature type="strand" evidence="26">
    <location>
        <begin position="42"/>
        <end position="44"/>
    </location>
</feature>
<feature type="helix" evidence="26">
    <location>
        <begin position="45"/>
        <end position="51"/>
    </location>
</feature>
<feature type="strand" evidence="26">
    <location>
        <begin position="62"/>
        <end position="64"/>
    </location>
</feature>
<feature type="turn" evidence="25">
    <location>
        <begin position="73"/>
        <end position="75"/>
    </location>
</feature>
<feature type="strand" evidence="25">
    <location>
        <begin position="76"/>
        <end position="78"/>
    </location>
</feature>
<feature type="helix" evidence="26">
    <location>
        <begin position="80"/>
        <end position="85"/>
    </location>
</feature>
<accession>Q13049</accession>
<accession>Q9NQP8</accession>
<reference key="1">
    <citation type="journal article" date="1995" name="Virology">
        <title>Identification of a novel human zinc finger protein that specifically interacts with the activation domain of lentiviral Tat proteins.</title>
        <authorList>
            <person name="Fridell R.A."/>
            <person name="Harding L.S."/>
            <person name="Bogerd H.P."/>
            <person name="Cullen B.R."/>
        </authorList>
    </citation>
    <scope>NUCLEOTIDE SEQUENCE [MRNA]</scope>
    <scope>FUNCTION (MICROBIAL INFECTION)</scope>
</reference>
<reference key="2">
    <citation type="journal article" date="2004" name="Nature">
        <title>DNA sequence and analysis of human chromosome 9.</title>
        <authorList>
            <person name="Humphray S.J."/>
            <person name="Oliver K."/>
            <person name="Hunt A.R."/>
            <person name="Plumb R.W."/>
            <person name="Loveland J.E."/>
            <person name="Howe K.L."/>
            <person name="Andrews T.D."/>
            <person name="Searle S."/>
            <person name="Hunt S.E."/>
            <person name="Scott C.E."/>
            <person name="Jones M.C."/>
            <person name="Ainscough R."/>
            <person name="Almeida J.P."/>
            <person name="Ambrose K.D."/>
            <person name="Ashwell R.I.S."/>
            <person name="Babbage A.K."/>
            <person name="Babbage S."/>
            <person name="Bagguley C.L."/>
            <person name="Bailey J."/>
            <person name="Banerjee R."/>
            <person name="Barker D.J."/>
            <person name="Barlow K.F."/>
            <person name="Bates K."/>
            <person name="Beasley H."/>
            <person name="Beasley O."/>
            <person name="Bird C.P."/>
            <person name="Bray-Allen S."/>
            <person name="Brown A.J."/>
            <person name="Brown J.Y."/>
            <person name="Burford D."/>
            <person name="Burrill W."/>
            <person name="Burton J."/>
            <person name="Carder C."/>
            <person name="Carter N.P."/>
            <person name="Chapman J.C."/>
            <person name="Chen Y."/>
            <person name="Clarke G."/>
            <person name="Clark S.Y."/>
            <person name="Clee C.M."/>
            <person name="Clegg S."/>
            <person name="Collier R.E."/>
            <person name="Corby N."/>
            <person name="Crosier M."/>
            <person name="Cummings A.T."/>
            <person name="Davies J."/>
            <person name="Dhami P."/>
            <person name="Dunn M."/>
            <person name="Dutta I."/>
            <person name="Dyer L.W."/>
            <person name="Earthrowl M.E."/>
            <person name="Faulkner L."/>
            <person name="Fleming C.J."/>
            <person name="Frankish A."/>
            <person name="Frankland J.A."/>
            <person name="French L."/>
            <person name="Fricker D.G."/>
            <person name="Garner P."/>
            <person name="Garnett J."/>
            <person name="Ghori J."/>
            <person name="Gilbert J.G.R."/>
            <person name="Glison C."/>
            <person name="Grafham D.V."/>
            <person name="Gribble S."/>
            <person name="Griffiths C."/>
            <person name="Griffiths-Jones S."/>
            <person name="Grocock R."/>
            <person name="Guy J."/>
            <person name="Hall R.E."/>
            <person name="Hammond S."/>
            <person name="Harley J.L."/>
            <person name="Harrison E.S.I."/>
            <person name="Hart E.A."/>
            <person name="Heath P.D."/>
            <person name="Henderson C.D."/>
            <person name="Hopkins B.L."/>
            <person name="Howard P.J."/>
            <person name="Howden P.J."/>
            <person name="Huckle E."/>
            <person name="Johnson C."/>
            <person name="Johnson D."/>
            <person name="Joy A.A."/>
            <person name="Kay M."/>
            <person name="Keenan S."/>
            <person name="Kershaw J.K."/>
            <person name="Kimberley A.M."/>
            <person name="King A."/>
            <person name="Knights A."/>
            <person name="Laird G.K."/>
            <person name="Langford C."/>
            <person name="Lawlor S."/>
            <person name="Leongamornlert D.A."/>
            <person name="Leversha M."/>
            <person name="Lloyd C."/>
            <person name="Lloyd D.M."/>
            <person name="Lovell J."/>
            <person name="Martin S."/>
            <person name="Mashreghi-Mohammadi M."/>
            <person name="Matthews L."/>
            <person name="McLaren S."/>
            <person name="McLay K.E."/>
            <person name="McMurray A."/>
            <person name="Milne S."/>
            <person name="Nickerson T."/>
            <person name="Nisbett J."/>
            <person name="Nordsiek G."/>
            <person name="Pearce A.V."/>
            <person name="Peck A.I."/>
            <person name="Porter K.M."/>
            <person name="Pandian R."/>
            <person name="Pelan S."/>
            <person name="Phillimore B."/>
            <person name="Povey S."/>
            <person name="Ramsey Y."/>
            <person name="Rand V."/>
            <person name="Scharfe M."/>
            <person name="Sehra H.K."/>
            <person name="Shownkeen R."/>
            <person name="Sims S.K."/>
            <person name="Skuce C.D."/>
            <person name="Smith M."/>
            <person name="Steward C.A."/>
            <person name="Swarbreck D."/>
            <person name="Sycamore N."/>
            <person name="Tester J."/>
            <person name="Thorpe A."/>
            <person name="Tracey A."/>
            <person name="Tromans A."/>
            <person name="Thomas D.W."/>
            <person name="Wall M."/>
            <person name="Wallis J.M."/>
            <person name="West A.P."/>
            <person name="Whitehead S.L."/>
            <person name="Willey D.L."/>
            <person name="Williams S.A."/>
            <person name="Wilming L."/>
            <person name="Wray P.W."/>
            <person name="Young L."/>
            <person name="Ashurst J.L."/>
            <person name="Coulson A."/>
            <person name="Blocker H."/>
            <person name="Durbin R.M."/>
            <person name="Sulston J.E."/>
            <person name="Hubbard T."/>
            <person name="Jackson M.J."/>
            <person name="Bentley D.R."/>
            <person name="Beck S."/>
            <person name="Rogers J."/>
            <person name="Dunham I."/>
        </authorList>
    </citation>
    <scope>NUCLEOTIDE SEQUENCE [LARGE SCALE GENOMIC DNA]</scope>
</reference>
<reference key="3">
    <citation type="journal article" date="2004" name="Genome Res.">
        <title>The status, quality, and expansion of the NIH full-length cDNA project: the Mammalian Gene Collection (MGC).</title>
        <authorList>
            <consortium name="The MGC Project Team"/>
        </authorList>
    </citation>
    <scope>NUCLEOTIDE SEQUENCE [LARGE SCALE MRNA]</scope>
    <source>
        <tissue>Skin</tissue>
    </source>
</reference>
<reference key="4">
    <citation type="submission" date="2009-03" db="UniProtKB">
        <authorList>
            <person name="Bienvenut W.V."/>
            <person name="Waridel P."/>
            <person name="Quadroni M."/>
        </authorList>
    </citation>
    <scope>PROTEIN SEQUENCE OF 2-15; 51-60; 70-101; 205-238; 248-282; 345-359; 467-500; 587-596 AND 605-613</scope>
    <scope>CLEAVAGE OF INITIATOR METHIONINE</scope>
    <scope>ACETYLATION AT ALA-2</scope>
    <scope>IDENTIFICATION BY MASS SPECTROMETRY</scope>
    <source>
        <tissue>Embryonic kidney</tissue>
    </source>
</reference>
<reference key="5">
    <citation type="journal article" date="2008" name="Proc. Natl. Acad. Sci. U.S.A.">
        <title>A quantitative atlas of mitotic phosphorylation.</title>
        <authorList>
            <person name="Dephoure N."/>
            <person name="Zhou C."/>
            <person name="Villen J."/>
            <person name="Beausoleil S.A."/>
            <person name="Bakalarski C.E."/>
            <person name="Elledge S.J."/>
            <person name="Gygi S.P."/>
        </authorList>
    </citation>
    <scope>IDENTIFICATION BY MASS SPECTROMETRY [LARGE SCALE ANALYSIS]</scope>
    <source>
        <tissue>Cervix carcinoma</tissue>
    </source>
</reference>
<reference key="6">
    <citation type="journal article" date="2009" name="Hum. Mol. Genet.">
        <title>TRIM32 is an E3 ubiquitin ligase for dysbindin.</title>
        <authorList>
            <person name="Locke M."/>
            <person name="Tinsley C.L."/>
            <person name="Benson M.A."/>
            <person name="Blake D.J."/>
        </authorList>
    </citation>
    <scope>FUNCTION AS AN E3 UBIQUITIN-PROTEIN LIGASE</scope>
    <scope>CATALYTIC ACTIVITY</scope>
    <scope>PATHWAY</scope>
    <scope>UBIQUITINATION</scope>
    <scope>SELF-ASSOCIATION</scope>
    <scope>INTERACTION WITH DTNBP1</scope>
</reference>
<reference key="7">
    <citation type="journal article" date="2011" name="J. Biol. Chem.">
        <title>TRIM32 protein sensitizes cells to tumor necrosis factor (TNFalpha)-induced apoptosis via its RING domain-dependent E3 ligase activity against X-linked inhibitor of apoptosis (XIAP).</title>
        <authorList>
            <person name="Ryu Y.S."/>
            <person name="Lee Y."/>
            <person name="Lee K.W."/>
            <person name="Hwang C.Y."/>
            <person name="Maeng J.S."/>
            <person name="Kim J.H."/>
            <person name="Seo Y.S."/>
            <person name="You K.H."/>
            <person name="Song B."/>
            <person name="Kwon K.S."/>
        </authorList>
    </citation>
    <scope>FUNCTION</scope>
    <scope>SUBCELLULAR LOCATION</scope>
    <scope>CATALYTIC ACTIVITY</scope>
</reference>
<reference key="8">
    <citation type="journal article" date="2012" name="J. Biol. Chem.">
        <title>Intrinsic protein-protein interaction-mediated and chaperonin-assisted sequential assembly of stable Bardet-Biedl syndrome protein complex, the BBSome.</title>
        <authorList>
            <person name="Zhang Q."/>
            <person name="Yu D."/>
            <person name="Seo S."/>
            <person name="Stone E.M."/>
            <person name="Sheffield V.C."/>
        </authorList>
    </citation>
    <scope>FUNCTION</scope>
</reference>
<reference key="9">
    <citation type="journal article" date="2012" name="J. Biol. Chem.">
        <title>TRIM32 protein modulates type I interferon induction and cellular antiviral response by targeting MITA/STING protein for K63-linked ubiquitination.</title>
        <authorList>
            <person name="Zhang J."/>
            <person name="Hu M.M."/>
            <person name="Wang Y.Y."/>
            <person name="Shu H.B."/>
        </authorList>
    </citation>
    <scope>FUNCTION</scope>
    <scope>SUBCELLULAR LOCATION</scope>
    <scope>MUTAGENESIS OF CYS-39</scope>
    <scope>CATALYTIC ACTIVITY</scope>
</reference>
<reference key="10">
    <citation type="journal article" date="2013" name="J. Proteome Res.">
        <title>Toward a comprehensive characterization of a human cancer cell phosphoproteome.</title>
        <authorList>
            <person name="Zhou H."/>
            <person name="Di Palma S."/>
            <person name="Preisinger C."/>
            <person name="Peng M."/>
            <person name="Polat A.N."/>
            <person name="Heck A.J."/>
            <person name="Mohammed S."/>
        </authorList>
    </citation>
    <scope>PHOSPHORYLATION [LARGE SCALE ANALYSIS] AT SER-335 AND SER-339</scope>
    <scope>IDENTIFICATION BY MASS SPECTROMETRY [LARGE SCALE ANALYSIS]</scope>
    <source>
        <tissue>Erythroleukemia</tissue>
    </source>
</reference>
<reference key="11">
    <citation type="journal article" date="2015" name="PLoS ONE">
        <title>SseK3 is a Salmonella effector that binds TRIM32 and modulates the host's NF-kappaB signalling activity.</title>
        <authorList>
            <person name="Yang Z."/>
            <person name="Soderholm A."/>
            <person name="Lung T.W."/>
            <person name="Giogha C."/>
            <person name="Hill M.M."/>
            <person name="Brown N.F."/>
            <person name="Hartland E."/>
            <person name="Teasdale R.D."/>
        </authorList>
    </citation>
    <scope>INTERACTION WITH S.TYPHIMURIUM SSEK3 (MICROBIAL INFECTION)</scope>
</reference>
<reference key="12">
    <citation type="journal article" date="2017" name="PLoS Pathog.">
        <title>TRIM32-TAX1BP1-dependent selective autophagic degradation of TRIF negatively regulates TLR3/4-mediated innate immune responses.</title>
        <authorList>
            <person name="Yang Q."/>
            <person name="Liu T.T."/>
            <person name="Lin H."/>
            <person name="Zhang M."/>
            <person name="Wei J."/>
            <person name="Luo W.W."/>
            <person name="Hu Y.H."/>
            <person name="Zhong B."/>
            <person name="Hu M.M."/>
            <person name="Shu H.B."/>
        </authorList>
    </citation>
    <scope>FUNCTION</scope>
    <scope>INTERACTION WITH TICAM1 AND TAX1BP1</scope>
</reference>
<reference key="13">
    <citation type="journal article" date="2019" name="Sci. Adv.">
        <title>Autophagy induction in atrophic muscle cells requires ULK1 activation by TRIM32 through unanchored K63-linked polyubiquitin chains.</title>
        <authorList>
            <person name="Di Rienzo M."/>
            <person name="Antonioli M."/>
            <person name="Fusco C."/>
            <person name="Liu Y."/>
            <person name="Mari M."/>
            <person name="Orhon I."/>
            <person name="Refolo G."/>
            <person name="Germani F."/>
            <person name="Corazzari M."/>
            <person name="Romagnoli A."/>
            <person name="Ciccosanti F."/>
            <person name="Mandriani B."/>
            <person name="Pellico M.T."/>
            <person name="De La Torre R."/>
            <person name="Ding H."/>
            <person name="Dentice M."/>
            <person name="Neri M."/>
            <person name="Ferlini A."/>
            <person name="Reggiori F."/>
            <person name="Kulesz-Martin M."/>
            <person name="Piacentini M."/>
            <person name="Merla G."/>
            <person name="Fimia G.M."/>
        </authorList>
    </citation>
    <scope>FUNCTION</scope>
    <scope>CATALYTIC ACTIVITY</scope>
    <scope>PATHWAY</scope>
    <scope>INTERACTION WITH AMBRA1</scope>
    <scope>MUTAGENESIS OF CYS-39</scope>
</reference>
<reference key="14">
    <citation type="journal article" date="2020" name="Cell. Signal.">
        <title>TRIM32 regulates mitochondrial mediated ROS levels and sensitizes the oxidative stress induced cell death.</title>
        <authorList>
            <person name="Prajapati P."/>
            <person name="Gohel D."/>
            <person name="Shinde A."/>
            <person name="Roy M."/>
            <person name="Singh K."/>
            <person name="Singh R."/>
        </authorList>
    </citation>
    <scope>FUNCTION</scope>
    <scope>SUBCELLULAR LOCATION</scope>
</reference>
<reference key="15">
    <citation type="journal article" date="2022" name="FASEB J.">
        <title>Ubiquitin ligase TRIM32 promotes dendrite arborization by mediating degradation of the epigenetic factor CDYL.</title>
        <authorList>
            <person name="Liu L."/>
            <person name="Liu T.T."/>
            <person name="Xie G.G."/>
            <person name="Zhu X.Q."/>
            <person name="Wang Y."/>
        </authorList>
    </citation>
    <scope>FUNCTION</scope>
</reference>
<reference key="16">
    <citation type="journal article" date="2023" name="Cell Death Dis.">
        <title>The ubiquitin ligase TRIM32 promotes the autophagic response to Mycobacterium tuberculosis infection in macrophages.</title>
        <authorList>
            <person name="Romagnoli A."/>
            <person name="Di Rienzo M."/>
            <person name="Petruccioli E."/>
            <person name="Fusco C."/>
            <person name="Palucci I."/>
            <person name="Micale L."/>
            <person name="Mazza T."/>
            <person name="Delogu G."/>
            <person name="Merla G."/>
            <person name="Goletti D."/>
            <person name="Piacentini M."/>
            <person name="Fimia G.M."/>
        </authorList>
    </citation>
    <scope>FUNCTION</scope>
    <scope>SUBCELLULAR LOCATION</scope>
</reference>
<reference key="17">
    <citation type="journal article" date="2023" name="Cell Rep.">
        <title>ATM-CHK2-TRIM32 axis regulates ATG7 ubiquitination to initiate autophagy under oxidative stress.</title>
        <authorList>
            <person name="Liu J."/>
            <person name="Lu S."/>
            <person name="Zheng L."/>
            <person name="Guo Q."/>
            <person name="Cao L."/>
            <person name="Xiao Y."/>
            <person name="Chen D."/>
            <person name="Zou Y."/>
            <person name="Liu X."/>
            <person name="Deng C."/>
            <person name="Zhang S."/>
            <person name="Yang R."/>
            <person name="Wang Y."/>
            <person name="Zhang Y."/>
            <person name="Zhang N."/>
            <person name="Song X."/>
            <person name="Xing C."/>
            <person name="Wang Z."/>
            <person name="Cao L."/>
        </authorList>
    </citation>
    <scope>FUNCTION</scope>
    <scope>CATALYTIC ACTIVITY</scope>
    <scope>PATHWAY</scope>
    <scope>MUTAGENESIS OF CYS-39 AND SER-55</scope>
    <scope>PHOSPHORYLATION AT SER-55</scope>
</reference>
<reference key="18">
    <citation type="submission" date="2005-11" db="PDB data bank">
        <title>Solution structure of the RING domain of the tripartite motif protein 32.</title>
        <authorList>
            <consortium name="RIKEN structural genomics initiative (RSGI)"/>
        </authorList>
    </citation>
    <scope>STRUCTURE BY NMR OF 10-84</scope>
</reference>
<reference key="19">
    <citation type="journal article" date="2002" name="Am. J. Hum. Genet.">
        <title>Limb-girdle muscular dystrophy type 2H associated with mutation in TRIM32, a putative E3-ubiquitin-ligase gene.</title>
        <authorList>
            <person name="Frosk P."/>
            <person name="Weiler T."/>
            <person name="Nylen E."/>
            <person name="Sudha T."/>
            <person name="Greenberg C.R."/>
            <person name="Morgan K."/>
            <person name="Fujiwara T.M."/>
            <person name="Wrogemann K."/>
        </authorList>
    </citation>
    <scope>VARIANT LGMDR8 ASN-487</scope>
    <scope>TISSUE SPECIFICITY</scope>
</reference>
<reference key="20">
    <citation type="journal article" date="2006" name="Proc. Natl. Acad. Sci. U.S.A.">
        <title>Homozygosity mapping with SNP arrays identifies TRIM32, an E3 ubiquitin ligase, as a Bardet-Biedl syndrome gene (BBS11).</title>
        <authorList>
            <person name="Chiang A.P."/>
            <person name="Beck J.S."/>
            <person name="Yen H.-J."/>
            <person name="Tayeh M.K."/>
            <person name="Scheetz T.E."/>
            <person name="Swiderski R.E."/>
            <person name="Nishimura D.Y."/>
            <person name="Braun T.A."/>
            <person name="Kim K.-Y.A."/>
            <person name="Huang J."/>
            <person name="Elbedour K."/>
            <person name="Carmi R."/>
            <person name="Slusarski D.C."/>
            <person name="Casavant T.L."/>
            <person name="Stone E.M."/>
            <person name="Sheffield V.C."/>
        </authorList>
    </citation>
    <scope>VARIANT BBS11 SER-130</scope>
</reference>
<reference key="21">
    <citation type="journal article" date="2008" name="Hum. Mutat.">
        <title>Mutations that impair interaction properties of TRIM32 associated with limb-girdle muscular dystrophy 2H.</title>
        <authorList>
            <person name="Saccone V."/>
            <person name="Palmieri M."/>
            <person name="Passamano L."/>
            <person name="Piluso G."/>
            <person name="Meroni G."/>
            <person name="Politano L."/>
            <person name="Nigro V."/>
        </authorList>
    </citation>
    <scope>VARIANTS LGMDR8 HIS-394 AND ASP-588 DEL</scope>
</reference>
<reference key="22">
    <citation type="journal article" date="2011" name="Hum. Mutat.">
        <title>BBS genotype-phenotype assessment of a multiethnic patient cohort calls for a revision of the disease definition.</title>
        <authorList>
            <person name="Deveault C."/>
            <person name="Billingsley G."/>
            <person name="Duncan J.L."/>
            <person name="Bin J."/>
            <person name="Theal R."/>
            <person name="Vincent A."/>
            <person name="Fieggen K.J."/>
            <person name="Gerth C."/>
            <person name="Noordeh N."/>
            <person name="Traboulsi E.I."/>
            <person name="Fishman G.A."/>
            <person name="Chitayat D."/>
            <person name="Knueppel T."/>
            <person name="Millan J.M."/>
            <person name="Munier F.L."/>
            <person name="Kennedy D."/>
            <person name="Jacobson S.G."/>
            <person name="Innes A.M."/>
            <person name="Mitchell G.A."/>
            <person name="Boycott K."/>
            <person name="Heon E."/>
        </authorList>
    </citation>
    <scope>VARIANT GLN-299</scope>
</reference>